<organism>
    <name type="scientific">Mycoplasmopsis pulmonis (strain UAB CTIP)</name>
    <name type="common">Mycoplasma pulmonis</name>
    <dbReference type="NCBI Taxonomy" id="272635"/>
    <lineage>
        <taxon>Bacteria</taxon>
        <taxon>Bacillati</taxon>
        <taxon>Mycoplasmatota</taxon>
        <taxon>Mycoplasmoidales</taxon>
        <taxon>Metamycoplasmataceae</taxon>
        <taxon>Mycoplasmopsis</taxon>
    </lineage>
</organism>
<evidence type="ECO:0000255" key="1">
    <source>
        <dbReference type="HAMAP-Rule" id="MF_00321"/>
    </source>
</evidence>
<gene>
    <name evidence="1" type="primary">engB</name>
    <name type="ordered locus">MYPU_2390</name>
</gene>
<dbReference type="EMBL" id="AL445563">
    <property type="protein sequence ID" value="CAC13412.1"/>
    <property type="molecule type" value="Genomic_DNA"/>
</dbReference>
<dbReference type="PIR" id="G90541">
    <property type="entry name" value="G90541"/>
</dbReference>
<dbReference type="RefSeq" id="WP_010925043.1">
    <property type="nucleotide sequence ID" value="NC_002771.1"/>
</dbReference>
<dbReference type="SMR" id="Q98QX1"/>
<dbReference type="STRING" id="272635.gene:17576827"/>
<dbReference type="KEGG" id="mpu:MYPU_2390"/>
<dbReference type="eggNOG" id="COG0218">
    <property type="taxonomic scope" value="Bacteria"/>
</dbReference>
<dbReference type="HOGENOM" id="CLU_033732_3_2_14"/>
<dbReference type="BioCyc" id="MPUL272635:G1GT6-240-MONOMER"/>
<dbReference type="Proteomes" id="UP000000528">
    <property type="component" value="Chromosome"/>
</dbReference>
<dbReference type="GO" id="GO:0005829">
    <property type="term" value="C:cytosol"/>
    <property type="evidence" value="ECO:0007669"/>
    <property type="project" value="TreeGrafter"/>
</dbReference>
<dbReference type="GO" id="GO:0005525">
    <property type="term" value="F:GTP binding"/>
    <property type="evidence" value="ECO:0007669"/>
    <property type="project" value="UniProtKB-UniRule"/>
</dbReference>
<dbReference type="GO" id="GO:0046872">
    <property type="term" value="F:metal ion binding"/>
    <property type="evidence" value="ECO:0007669"/>
    <property type="project" value="UniProtKB-KW"/>
</dbReference>
<dbReference type="GO" id="GO:0000917">
    <property type="term" value="P:division septum assembly"/>
    <property type="evidence" value="ECO:0007669"/>
    <property type="project" value="UniProtKB-KW"/>
</dbReference>
<dbReference type="CDD" id="cd01876">
    <property type="entry name" value="YihA_EngB"/>
    <property type="match status" value="1"/>
</dbReference>
<dbReference type="Gene3D" id="3.40.50.300">
    <property type="entry name" value="P-loop containing nucleotide triphosphate hydrolases"/>
    <property type="match status" value="1"/>
</dbReference>
<dbReference type="HAMAP" id="MF_00321">
    <property type="entry name" value="GTPase_EngB"/>
    <property type="match status" value="1"/>
</dbReference>
<dbReference type="InterPro" id="IPR030393">
    <property type="entry name" value="G_ENGB_dom"/>
</dbReference>
<dbReference type="InterPro" id="IPR006073">
    <property type="entry name" value="GTP-bd"/>
</dbReference>
<dbReference type="InterPro" id="IPR019987">
    <property type="entry name" value="GTP-bd_ribosome_bio_YsxC"/>
</dbReference>
<dbReference type="InterPro" id="IPR027417">
    <property type="entry name" value="P-loop_NTPase"/>
</dbReference>
<dbReference type="InterPro" id="IPR005225">
    <property type="entry name" value="Small_GTP-bd"/>
</dbReference>
<dbReference type="NCBIfam" id="TIGR03598">
    <property type="entry name" value="GTPase_YsxC"/>
    <property type="match status" value="1"/>
</dbReference>
<dbReference type="NCBIfam" id="TIGR00231">
    <property type="entry name" value="small_GTP"/>
    <property type="match status" value="1"/>
</dbReference>
<dbReference type="PANTHER" id="PTHR11649:SF13">
    <property type="entry name" value="ENGB-TYPE G DOMAIN-CONTAINING PROTEIN"/>
    <property type="match status" value="1"/>
</dbReference>
<dbReference type="PANTHER" id="PTHR11649">
    <property type="entry name" value="MSS1/TRME-RELATED GTP-BINDING PROTEIN"/>
    <property type="match status" value="1"/>
</dbReference>
<dbReference type="Pfam" id="PF01926">
    <property type="entry name" value="MMR_HSR1"/>
    <property type="match status" value="1"/>
</dbReference>
<dbReference type="SUPFAM" id="SSF52540">
    <property type="entry name" value="P-loop containing nucleoside triphosphate hydrolases"/>
    <property type="match status" value="1"/>
</dbReference>
<dbReference type="PROSITE" id="PS51706">
    <property type="entry name" value="G_ENGB"/>
    <property type="match status" value="1"/>
</dbReference>
<reference key="1">
    <citation type="journal article" date="2001" name="Nucleic Acids Res.">
        <title>The complete genome sequence of the murine respiratory pathogen Mycoplasma pulmonis.</title>
        <authorList>
            <person name="Chambaud I."/>
            <person name="Heilig R."/>
            <person name="Ferris S."/>
            <person name="Barbe V."/>
            <person name="Samson D."/>
            <person name="Galisson F."/>
            <person name="Moszer I."/>
            <person name="Dybvig K."/>
            <person name="Wroblewski H."/>
            <person name="Viari A."/>
            <person name="Rocha E.P.C."/>
            <person name="Blanchard A."/>
        </authorList>
    </citation>
    <scope>NUCLEOTIDE SEQUENCE [LARGE SCALE GENOMIC DNA]</scope>
    <source>
        <strain>UAB CTIP</strain>
    </source>
</reference>
<keyword id="KW-0131">Cell cycle</keyword>
<keyword id="KW-0132">Cell division</keyword>
<keyword id="KW-0342">GTP-binding</keyword>
<keyword id="KW-0460">Magnesium</keyword>
<keyword id="KW-0479">Metal-binding</keyword>
<keyword id="KW-0547">Nucleotide-binding</keyword>
<keyword id="KW-1185">Reference proteome</keyword>
<keyword id="KW-0717">Septation</keyword>
<feature type="chain" id="PRO_0000157765" description="Probable GTP-binding protein EngB">
    <location>
        <begin position="1"/>
        <end position="186"/>
    </location>
</feature>
<feature type="domain" description="EngB-type G" evidence="1">
    <location>
        <begin position="18"/>
        <end position="186"/>
    </location>
</feature>
<feature type="binding site" evidence="1">
    <location>
        <begin position="26"/>
        <end position="33"/>
    </location>
    <ligand>
        <name>GTP</name>
        <dbReference type="ChEBI" id="CHEBI:37565"/>
    </ligand>
</feature>
<feature type="binding site" evidence="1">
    <location>
        <position position="33"/>
    </location>
    <ligand>
        <name>Mg(2+)</name>
        <dbReference type="ChEBI" id="CHEBI:18420"/>
    </ligand>
</feature>
<feature type="binding site" evidence="1">
    <location>
        <begin position="52"/>
        <end position="56"/>
    </location>
    <ligand>
        <name>GTP</name>
        <dbReference type="ChEBI" id="CHEBI:37565"/>
    </ligand>
</feature>
<feature type="binding site" evidence="1">
    <location>
        <position position="54"/>
    </location>
    <ligand>
        <name>Mg(2+)</name>
        <dbReference type="ChEBI" id="CHEBI:18420"/>
    </ligand>
</feature>
<feature type="binding site" evidence="1">
    <location>
        <begin position="70"/>
        <end position="73"/>
    </location>
    <ligand>
        <name>GTP</name>
        <dbReference type="ChEBI" id="CHEBI:37565"/>
    </ligand>
</feature>
<feature type="binding site" evidence="1">
    <location>
        <begin position="137"/>
        <end position="140"/>
    </location>
    <ligand>
        <name>GTP</name>
        <dbReference type="ChEBI" id="CHEBI:37565"/>
    </ligand>
</feature>
<feature type="binding site" evidence="1">
    <location>
        <begin position="166"/>
        <end position="168"/>
    </location>
    <ligand>
        <name>GTP</name>
        <dbReference type="ChEBI" id="CHEBI:37565"/>
    </ligand>
</feature>
<protein>
    <recommendedName>
        <fullName evidence="1">Probable GTP-binding protein EngB</fullName>
    </recommendedName>
</protein>
<sequence length="186" mass="21354">MLHFIKSASNSQSWYNHDKVEICFIGRSNVGKSSLINSLSNSAVSKVSNTPGRTQLINFFEDDQKNVYVDLPGYGFAQMPKDKLEKMHQMIDEYLQNRKNLKTIVLLFDSRRGILDQDLDFINWAQQAKKNIILLATKIDKLNQAQKHKLLVSLKELNLEKSVLLVSSLKRTNIDNLKKLLASEFK</sequence>
<name>ENGB_MYCPU</name>
<accession>Q98QX1</accession>
<proteinExistence type="inferred from homology"/>
<comment type="function">
    <text evidence="1">Necessary for normal cell division and for the maintenance of normal septation.</text>
</comment>
<comment type="cofactor">
    <cofactor evidence="1">
        <name>Mg(2+)</name>
        <dbReference type="ChEBI" id="CHEBI:18420"/>
    </cofactor>
</comment>
<comment type="similarity">
    <text evidence="1">Belongs to the TRAFAC class TrmE-Era-EngA-EngB-Septin-like GTPase superfamily. EngB GTPase family.</text>
</comment>